<proteinExistence type="evidence at transcript level"/>
<name>INR1L_CARAU</name>
<feature type="signal peptide" evidence="1">
    <location>
        <begin position="1"/>
        <end position="22"/>
    </location>
</feature>
<feature type="chain" id="PRO_5002989155" description="Interferon gamma receptor 1-like">
    <location>
        <begin position="23"/>
        <end position="344"/>
    </location>
</feature>
<feature type="topological domain" description="Extracellular" evidence="6">
    <location>
        <begin position="23"/>
        <end position="229"/>
    </location>
</feature>
<feature type="transmembrane region" description="Helical" evidence="1">
    <location>
        <begin position="230"/>
        <end position="250"/>
    </location>
</feature>
<feature type="topological domain" description="Cytoplasmic" evidence="6">
    <location>
        <begin position="251"/>
        <end position="344"/>
    </location>
</feature>
<feature type="domain" description="Fibronectin type-III" evidence="6">
    <location>
        <begin position="24"/>
        <end position="102"/>
    </location>
</feature>
<feature type="region of interest" description="Disordered" evidence="3">
    <location>
        <begin position="300"/>
        <end position="344"/>
    </location>
</feature>
<feature type="glycosylation site" description="N-linked (GlcNAc...) asparagine" evidence="2">
    <location>
        <position position="29"/>
    </location>
</feature>
<feature type="glycosylation site" description="N-linked (GlcNAc...) asparagine" evidence="2">
    <location>
        <position position="44"/>
    </location>
</feature>
<feature type="glycosylation site" description="N-linked (GlcNAc...) asparagine" evidence="2">
    <location>
        <position position="132"/>
    </location>
</feature>
<feature type="glycosylation site" description="N-linked (GlcNAc...) asparagine" evidence="2">
    <location>
        <position position="189"/>
    </location>
</feature>
<gene>
    <name evidence="6" type="primary">ifngr1l</name>
    <name evidence="5" type="synonym">ifngr1-2</name>
</gene>
<sequence>MSKHAVVQFGVVYALLFPGVFGFVPSPTNVSVVCHNFVNVLYWNYSNPTEQTKFAIKVEPYESPSQTVDTSQTYLDISSYSTDVEDDYLVLLTAHDGQEKSEDVSIRFTYSKDYFDENKHKYKCSLDFPAVNTSVHKDVIEVSFQHPFKLYKQEIMKEEFTYKITHDEQMVKYSCFEDEDLCNAEVHFNQSVAGQCVELKLEGVIAGIPSYTYSNVCVPQPTPETDKTGIIAALIGGATVVLFIIMGFVWLLWRKWSNIPQMPQGLWCIISKQSHTMLLSQPEPTDICPVTSQGPLNYLTEEDQSVSARDDTGADPPVVSEEGMAGEDSQGLGCSSDYDRPKFL</sequence>
<reference evidence="8" key="1">
    <citation type="journal article" date="2009" name="Mol. Immunol.">
        <title>Molecular characterization of novel interferon gamma receptor 1 isoforms in zebrafish (Danio rerio) and goldfish (Carassius auratus L.).</title>
        <authorList>
            <person name="Grayfer L."/>
            <person name="Belosevic M."/>
        </authorList>
    </citation>
    <scope>NUCLEOTIDE SEQUENCE [MRNA]</scope>
    <scope>FUNCTION</scope>
    <scope>SUBCELLULAR LOCATION</scope>
    <scope>TISSUE SPECIFICITY</scope>
    <scope>INDUCTION</scope>
</reference>
<dbReference type="EMBL" id="GQ149698">
    <property type="protein sequence ID" value="ACV41809.1"/>
    <property type="molecule type" value="mRNA"/>
</dbReference>
<dbReference type="SMR" id="C8AW47"/>
<dbReference type="GlyCosmos" id="C8AW47">
    <property type="glycosylation" value="4 sites, No reported glycans"/>
</dbReference>
<dbReference type="Proteomes" id="UP000515129">
    <property type="component" value="Unplaced"/>
</dbReference>
<dbReference type="GO" id="GO:0005886">
    <property type="term" value="C:plasma membrane"/>
    <property type="evidence" value="ECO:0007669"/>
    <property type="project" value="UniProtKB-SubCell"/>
</dbReference>
<dbReference type="GO" id="GO:0004896">
    <property type="term" value="F:cytokine receptor activity"/>
    <property type="evidence" value="ECO:0007669"/>
    <property type="project" value="TreeGrafter"/>
</dbReference>
<dbReference type="Gene3D" id="2.60.40.10">
    <property type="entry name" value="Immunoglobulins"/>
    <property type="match status" value="1"/>
</dbReference>
<dbReference type="InterPro" id="IPR003961">
    <property type="entry name" value="FN3_dom"/>
</dbReference>
<dbReference type="InterPro" id="IPR036116">
    <property type="entry name" value="FN3_sf"/>
</dbReference>
<dbReference type="InterPro" id="IPR013783">
    <property type="entry name" value="Ig-like_fold"/>
</dbReference>
<dbReference type="InterPro" id="IPR050650">
    <property type="entry name" value="Type-II_Cytokine-TF_Rcpt"/>
</dbReference>
<dbReference type="PANTHER" id="PTHR20859:SF87">
    <property type="entry name" value="CYTOKINE RECEPTOR FAMILY MEMBER B13-RELATED"/>
    <property type="match status" value="1"/>
</dbReference>
<dbReference type="PANTHER" id="PTHR20859">
    <property type="entry name" value="INTERFERON/INTERLEUKIN RECEPTOR"/>
    <property type="match status" value="1"/>
</dbReference>
<dbReference type="Pfam" id="PF01108">
    <property type="entry name" value="Tissue_fac"/>
    <property type="match status" value="1"/>
</dbReference>
<dbReference type="SUPFAM" id="SSF49265">
    <property type="entry name" value="Fibronectin type III"/>
    <property type="match status" value="1"/>
</dbReference>
<accession>C8AW47</accession>
<comment type="function">
    <text evidence="4">Receptor which shows binding specificity for the cytokine ifng1 (interferon gamma 1).</text>
</comment>
<comment type="subcellular location">
    <subcellularLocation>
        <location evidence="7">Cell membrane</location>
        <topology evidence="1">Single-pass type I membrane protein</topology>
    </subcellularLocation>
</comment>
<comment type="tissue specificity">
    <text evidence="4">Highly expressed in brain. Also detected in spleen, heart, intestine, gill and kidney. In immune cell populations, detected at low levels in monocytes, peripheral blood leukocytes, splenocytes, neutrophils and mature macrophages.</text>
</comment>
<comment type="induction">
    <text evidence="4">Up-regulated in response to ifng1 (interferon gamma 1) and tnfb (TNF-alpha 2).</text>
</comment>
<comment type="similarity">
    <text evidence="6">Belongs to the type II cytokine receptor family.</text>
</comment>
<organism evidence="8">
    <name type="scientific">Carassius auratus</name>
    <name type="common">Goldfish</name>
    <dbReference type="NCBI Taxonomy" id="7957"/>
    <lineage>
        <taxon>Eukaryota</taxon>
        <taxon>Metazoa</taxon>
        <taxon>Chordata</taxon>
        <taxon>Craniata</taxon>
        <taxon>Vertebrata</taxon>
        <taxon>Euteleostomi</taxon>
        <taxon>Actinopterygii</taxon>
        <taxon>Neopterygii</taxon>
        <taxon>Teleostei</taxon>
        <taxon>Ostariophysi</taxon>
        <taxon>Cypriniformes</taxon>
        <taxon>Cyprinidae</taxon>
        <taxon>Cyprininae</taxon>
        <taxon>Carassius</taxon>
    </lineage>
</organism>
<protein>
    <recommendedName>
        <fullName evidence="6">Interferon gamma receptor 1-like</fullName>
    </recommendedName>
    <alternativeName>
        <fullName evidence="5">Interferon gamma receptor 1-2</fullName>
    </alternativeName>
</protein>
<evidence type="ECO:0000255" key="1"/>
<evidence type="ECO:0000255" key="2">
    <source>
        <dbReference type="PROSITE-ProRule" id="PRU00498"/>
    </source>
</evidence>
<evidence type="ECO:0000256" key="3">
    <source>
        <dbReference type="SAM" id="MobiDB-lite"/>
    </source>
</evidence>
<evidence type="ECO:0000269" key="4">
    <source>
    </source>
</evidence>
<evidence type="ECO:0000303" key="5">
    <source>
    </source>
</evidence>
<evidence type="ECO:0000305" key="6"/>
<evidence type="ECO:0000305" key="7">
    <source>
    </source>
</evidence>
<evidence type="ECO:0000312" key="8">
    <source>
        <dbReference type="EMBL" id="ACV41809.1"/>
    </source>
</evidence>
<keyword id="KW-1003">Cell membrane</keyword>
<keyword id="KW-0325">Glycoprotein</keyword>
<keyword id="KW-0472">Membrane</keyword>
<keyword id="KW-0675">Receptor</keyword>
<keyword id="KW-1185">Reference proteome</keyword>
<keyword id="KW-0732">Signal</keyword>
<keyword id="KW-0812">Transmembrane</keyword>
<keyword id="KW-1133">Transmembrane helix</keyword>